<proteinExistence type="inferred from homology"/>
<sequence length="676" mass="72420">MTQAHHDDAGARNALQGGLATDPKHKARIEELAERIEKYRASYYAGHPEISDAAFDALEDELRALDPAHPVLARVGSASLITEWEKARHEIPMGSLNKVVSEDELLGWVARCDEILVKDGHGDGGTGAAPPAPGSISSVAGDLFVAEKLDGISIEVIYKGGKLVDAITRGDGEWGERITANVARMKGIPSRIREKGRLSVRGEIILRLSDMKRHFPGVTSPRNMAAGAAKRFDGQGAEHCTVLFYDVADHLEIPTCRARFAWLRELGFATPQTAHGSVEDVVKLYRRYSSELRAGLDYEIDGLVVYVDSLHVQGLLGDVNRRPRGAVAFKFASPAKVTTVVAIQWDTGPSGRVTPVAIVEPVELAGANVRRASLHNSANVRSLGIGVGDEVLVSRRNDVIPYVEEVVEKRGPVAVPPSVCPVCSAPLVVEGEYLLCRNAACRALIEGRIHNWIDAIGALEWGDKLIEQVVAAGLVREPLDLYKLTVKSIADLDRRGEKSATKCLEQLKSRLPLALPVFLAALGIEGFAIQTARLLVSAGYTTIEKLLAAGEDELAGIPGLGAIKAASIVRGLRARSDEIGRLLAAGIVPVAPEAEGPLAGLTFCFTGAGARPRGELTHLVESSGGRVLNSVTKELNYLVIADVASTSSKAVKARKYGTKLITEDDLDKLIAERRGG</sequence>
<gene>
    <name evidence="1" type="primary">ligA</name>
    <name type="ordered locus">sce4457</name>
</gene>
<reference key="1">
    <citation type="journal article" date="2007" name="Nat. Biotechnol.">
        <title>Complete genome sequence of the myxobacterium Sorangium cellulosum.</title>
        <authorList>
            <person name="Schneiker S."/>
            <person name="Perlova O."/>
            <person name="Kaiser O."/>
            <person name="Gerth K."/>
            <person name="Alici A."/>
            <person name="Altmeyer M.O."/>
            <person name="Bartels D."/>
            <person name="Bekel T."/>
            <person name="Beyer S."/>
            <person name="Bode E."/>
            <person name="Bode H.B."/>
            <person name="Bolten C.J."/>
            <person name="Choudhuri J.V."/>
            <person name="Doss S."/>
            <person name="Elnakady Y.A."/>
            <person name="Frank B."/>
            <person name="Gaigalat L."/>
            <person name="Goesmann A."/>
            <person name="Groeger C."/>
            <person name="Gross F."/>
            <person name="Jelsbak L."/>
            <person name="Jelsbak L."/>
            <person name="Kalinowski J."/>
            <person name="Kegler C."/>
            <person name="Knauber T."/>
            <person name="Konietzny S."/>
            <person name="Kopp M."/>
            <person name="Krause L."/>
            <person name="Krug D."/>
            <person name="Linke B."/>
            <person name="Mahmud T."/>
            <person name="Martinez-Arias R."/>
            <person name="McHardy A.C."/>
            <person name="Merai M."/>
            <person name="Meyer F."/>
            <person name="Mormann S."/>
            <person name="Munoz-Dorado J."/>
            <person name="Perez J."/>
            <person name="Pradella S."/>
            <person name="Rachid S."/>
            <person name="Raddatz G."/>
            <person name="Rosenau F."/>
            <person name="Rueckert C."/>
            <person name="Sasse F."/>
            <person name="Scharfe M."/>
            <person name="Schuster S.C."/>
            <person name="Suen G."/>
            <person name="Treuner-Lange A."/>
            <person name="Velicer G.J."/>
            <person name="Vorholter F.-J."/>
            <person name="Weissman K.J."/>
            <person name="Welch R.D."/>
            <person name="Wenzel S.C."/>
            <person name="Whitworth D.E."/>
            <person name="Wilhelm S."/>
            <person name="Wittmann C."/>
            <person name="Bloecker H."/>
            <person name="Puehler A."/>
            <person name="Mueller R."/>
        </authorList>
    </citation>
    <scope>NUCLEOTIDE SEQUENCE [LARGE SCALE GENOMIC DNA]</scope>
    <source>
        <strain>So ce56</strain>
    </source>
</reference>
<keyword id="KW-0227">DNA damage</keyword>
<keyword id="KW-0234">DNA repair</keyword>
<keyword id="KW-0235">DNA replication</keyword>
<keyword id="KW-0436">Ligase</keyword>
<keyword id="KW-0460">Magnesium</keyword>
<keyword id="KW-0464">Manganese</keyword>
<keyword id="KW-0479">Metal-binding</keyword>
<keyword id="KW-0520">NAD</keyword>
<keyword id="KW-1185">Reference proteome</keyword>
<keyword id="KW-0862">Zinc</keyword>
<comment type="function">
    <text evidence="1">DNA ligase that catalyzes the formation of phosphodiester linkages between 5'-phosphoryl and 3'-hydroxyl groups in double-stranded DNA using NAD as a coenzyme and as the energy source for the reaction. It is essential for DNA replication and repair of damaged DNA.</text>
</comment>
<comment type="catalytic activity">
    <reaction evidence="1">
        <text>NAD(+) + (deoxyribonucleotide)n-3'-hydroxyl + 5'-phospho-(deoxyribonucleotide)m = (deoxyribonucleotide)n+m + AMP + beta-nicotinamide D-nucleotide.</text>
        <dbReference type="EC" id="6.5.1.2"/>
    </reaction>
</comment>
<comment type="cofactor">
    <cofactor evidence="1">
        <name>Mg(2+)</name>
        <dbReference type="ChEBI" id="CHEBI:18420"/>
    </cofactor>
    <cofactor evidence="1">
        <name>Mn(2+)</name>
        <dbReference type="ChEBI" id="CHEBI:29035"/>
    </cofactor>
</comment>
<comment type="similarity">
    <text evidence="1">Belongs to the NAD-dependent DNA ligase family. LigA subfamily.</text>
</comment>
<dbReference type="EC" id="6.5.1.2" evidence="1"/>
<dbReference type="EMBL" id="AM746676">
    <property type="protein sequence ID" value="CAN94620.1"/>
    <property type="molecule type" value="Genomic_DNA"/>
</dbReference>
<dbReference type="RefSeq" id="WP_012237089.1">
    <property type="nucleotide sequence ID" value="NC_010162.1"/>
</dbReference>
<dbReference type="SMR" id="A9F3W3"/>
<dbReference type="STRING" id="448385.sce4457"/>
<dbReference type="KEGG" id="scl:sce4457"/>
<dbReference type="eggNOG" id="COG0272">
    <property type="taxonomic scope" value="Bacteria"/>
</dbReference>
<dbReference type="HOGENOM" id="CLU_007764_2_3_7"/>
<dbReference type="OrthoDB" id="9759736at2"/>
<dbReference type="BioCyc" id="SCEL448385:SCE_RS22865-MONOMER"/>
<dbReference type="Proteomes" id="UP000002139">
    <property type="component" value="Chromosome"/>
</dbReference>
<dbReference type="GO" id="GO:0003911">
    <property type="term" value="F:DNA ligase (NAD+) activity"/>
    <property type="evidence" value="ECO:0007669"/>
    <property type="project" value="UniProtKB-UniRule"/>
</dbReference>
<dbReference type="GO" id="GO:0046872">
    <property type="term" value="F:metal ion binding"/>
    <property type="evidence" value="ECO:0007669"/>
    <property type="project" value="UniProtKB-KW"/>
</dbReference>
<dbReference type="GO" id="GO:0006281">
    <property type="term" value="P:DNA repair"/>
    <property type="evidence" value="ECO:0007669"/>
    <property type="project" value="UniProtKB-KW"/>
</dbReference>
<dbReference type="GO" id="GO:0006260">
    <property type="term" value="P:DNA replication"/>
    <property type="evidence" value="ECO:0007669"/>
    <property type="project" value="UniProtKB-KW"/>
</dbReference>
<dbReference type="CDD" id="cd17748">
    <property type="entry name" value="BRCT_DNA_ligase_like"/>
    <property type="match status" value="1"/>
</dbReference>
<dbReference type="Gene3D" id="1.10.150.20">
    <property type="entry name" value="5' to 3' exonuclease, C-terminal subdomain"/>
    <property type="match status" value="2"/>
</dbReference>
<dbReference type="Gene3D" id="3.40.50.10190">
    <property type="entry name" value="BRCT domain"/>
    <property type="match status" value="1"/>
</dbReference>
<dbReference type="Gene3D" id="3.30.470.30">
    <property type="entry name" value="DNA ligase/mRNA capping enzyme"/>
    <property type="match status" value="1"/>
</dbReference>
<dbReference type="Gene3D" id="1.10.287.610">
    <property type="entry name" value="Helix hairpin bin"/>
    <property type="match status" value="1"/>
</dbReference>
<dbReference type="Gene3D" id="2.40.50.140">
    <property type="entry name" value="Nucleic acid-binding proteins"/>
    <property type="match status" value="1"/>
</dbReference>
<dbReference type="HAMAP" id="MF_01588">
    <property type="entry name" value="DNA_ligase_A"/>
    <property type="match status" value="1"/>
</dbReference>
<dbReference type="InterPro" id="IPR001357">
    <property type="entry name" value="BRCT_dom"/>
</dbReference>
<dbReference type="InterPro" id="IPR036420">
    <property type="entry name" value="BRCT_dom_sf"/>
</dbReference>
<dbReference type="InterPro" id="IPR001679">
    <property type="entry name" value="DNA_ligase"/>
</dbReference>
<dbReference type="InterPro" id="IPR013839">
    <property type="entry name" value="DNAligase_adenylation"/>
</dbReference>
<dbReference type="InterPro" id="IPR013840">
    <property type="entry name" value="DNAligase_N"/>
</dbReference>
<dbReference type="InterPro" id="IPR012340">
    <property type="entry name" value="NA-bd_OB-fold"/>
</dbReference>
<dbReference type="InterPro" id="IPR004150">
    <property type="entry name" value="NAD_DNA_ligase_OB"/>
</dbReference>
<dbReference type="InterPro" id="IPR010994">
    <property type="entry name" value="RuvA_2-like"/>
</dbReference>
<dbReference type="NCBIfam" id="NF005932">
    <property type="entry name" value="PRK07956.1"/>
    <property type="match status" value="1"/>
</dbReference>
<dbReference type="Pfam" id="PF00533">
    <property type="entry name" value="BRCT"/>
    <property type="match status" value="1"/>
</dbReference>
<dbReference type="Pfam" id="PF01653">
    <property type="entry name" value="DNA_ligase_aden"/>
    <property type="match status" value="1"/>
</dbReference>
<dbReference type="Pfam" id="PF03120">
    <property type="entry name" value="DNA_ligase_OB"/>
    <property type="match status" value="1"/>
</dbReference>
<dbReference type="Pfam" id="PF14520">
    <property type="entry name" value="HHH_5"/>
    <property type="match status" value="1"/>
</dbReference>
<dbReference type="PIRSF" id="PIRSF001604">
    <property type="entry name" value="LigA"/>
    <property type="match status" value="1"/>
</dbReference>
<dbReference type="SMART" id="SM00292">
    <property type="entry name" value="BRCT"/>
    <property type="match status" value="1"/>
</dbReference>
<dbReference type="SMART" id="SM00532">
    <property type="entry name" value="LIGANc"/>
    <property type="match status" value="1"/>
</dbReference>
<dbReference type="SUPFAM" id="SSF52113">
    <property type="entry name" value="BRCT domain"/>
    <property type="match status" value="1"/>
</dbReference>
<dbReference type="SUPFAM" id="SSF56091">
    <property type="entry name" value="DNA ligase/mRNA capping enzyme, catalytic domain"/>
    <property type="match status" value="1"/>
</dbReference>
<dbReference type="SUPFAM" id="SSF50249">
    <property type="entry name" value="Nucleic acid-binding proteins"/>
    <property type="match status" value="1"/>
</dbReference>
<dbReference type="SUPFAM" id="SSF47781">
    <property type="entry name" value="RuvA domain 2-like"/>
    <property type="match status" value="1"/>
</dbReference>
<dbReference type="PROSITE" id="PS50172">
    <property type="entry name" value="BRCT"/>
    <property type="match status" value="1"/>
</dbReference>
<feature type="chain" id="PRO_0000340384" description="DNA ligase">
    <location>
        <begin position="1"/>
        <end position="676"/>
    </location>
</feature>
<feature type="domain" description="BRCT" evidence="1">
    <location>
        <begin position="593"/>
        <end position="676"/>
    </location>
</feature>
<feature type="region of interest" description="Disordered" evidence="2">
    <location>
        <begin position="1"/>
        <end position="23"/>
    </location>
</feature>
<feature type="compositionally biased region" description="Basic and acidic residues" evidence="2">
    <location>
        <begin position="1"/>
        <end position="10"/>
    </location>
</feature>
<feature type="active site" description="N6-AMP-lysine intermediate" evidence="1">
    <location>
        <position position="148"/>
    </location>
</feature>
<feature type="binding site" evidence="1">
    <location>
        <begin position="52"/>
        <end position="56"/>
    </location>
    <ligand>
        <name>NAD(+)</name>
        <dbReference type="ChEBI" id="CHEBI:57540"/>
    </ligand>
</feature>
<feature type="binding site" evidence="1">
    <location>
        <begin position="95"/>
        <end position="96"/>
    </location>
    <ligand>
        <name>NAD(+)</name>
        <dbReference type="ChEBI" id="CHEBI:57540"/>
    </ligand>
</feature>
<feature type="binding site" evidence="1">
    <location>
        <position position="169"/>
    </location>
    <ligand>
        <name>NAD(+)</name>
        <dbReference type="ChEBI" id="CHEBI:57540"/>
    </ligand>
</feature>
<feature type="binding site" evidence="1">
    <location>
        <position position="203"/>
    </location>
    <ligand>
        <name>NAD(+)</name>
        <dbReference type="ChEBI" id="CHEBI:57540"/>
    </ligand>
</feature>
<feature type="binding site" evidence="1">
    <location>
        <position position="330"/>
    </location>
    <ligand>
        <name>NAD(+)</name>
        <dbReference type="ChEBI" id="CHEBI:57540"/>
    </ligand>
</feature>
<feature type="binding site" evidence="1">
    <location>
        <position position="420"/>
    </location>
    <ligand>
        <name>Zn(2+)</name>
        <dbReference type="ChEBI" id="CHEBI:29105"/>
    </ligand>
</feature>
<feature type="binding site" evidence="1">
    <location>
        <position position="423"/>
    </location>
    <ligand>
        <name>Zn(2+)</name>
        <dbReference type="ChEBI" id="CHEBI:29105"/>
    </ligand>
</feature>
<feature type="binding site" evidence="1">
    <location>
        <position position="436"/>
    </location>
    <ligand>
        <name>Zn(2+)</name>
        <dbReference type="ChEBI" id="CHEBI:29105"/>
    </ligand>
</feature>
<feature type="binding site" evidence="1">
    <location>
        <position position="441"/>
    </location>
    <ligand>
        <name>Zn(2+)</name>
        <dbReference type="ChEBI" id="CHEBI:29105"/>
    </ligand>
</feature>
<name>DNLJ_SORC5</name>
<protein>
    <recommendedName>
        <fullName evidence="1">DNA ligase</fullName>
        <ecNumber evidence="1">6.5.1.2</ecNumber>
    </recommendedName>
    <alternativeName>
        <fullName evidence="1">Polydeoxyribonucleotide synthase [NAD(+)]</fullName>
    </alternativeName>
</protein>
<organism>
    <name type="scientific">Sorangium cellulosum (strain So ce56)</name>
    <name type="common">Polyangium cellulosum (strain So ce56)</name>
    <dbReference type="NCBI Taxonomy" id="448385"/>
    <lineage>
        <taxon>Bacteria</taxon>
        <taxon>Pseudomonadati</taxon>
        <taxon>Myxococcota</taxon>
        <taxon>Polyangia</taxon>
        <taxon>Polyangiales</taxon>
        <taxon>Polyangiaceae</taxon>
        <taxon>Sorangium</taxon>
    </lineage>
</organism>
<evidence type="ECO:0000255" key="1">
    <source>
        <dbReference type="HAMAP-Rule" id="MF_01588"/>
    </source>
</evidence>
<evidence type="ECO:0000256" key="2">
    <source>
        <dbReference type="SAM" id="MobiDB-lite"/>
    </source>
</evidence>
<accession>A9F3W3</accession>